<comment type="function">
    <text>Factor Xa is a vitamin K-dependent glycoprotein that converts prothrombin to thrombin in the presence of factor Va, calcium and phospholipid during blood clotting. VAP cleaves the fusion proteins of Sendai virus, NDV, and influenza virus a at a specific single arginine-containing site, and plays a key role in the viral spreading in the allantoic sac.</text>
</comment>
<comment type="catalytic activity">
    <reaction>
        <text>Selective cleavage of Arg-|-Thr and then Arg-|-Ile bonds in prothrombin to form thrombin.</text>
        <dbReference type="EC" id="3.4.21.6"/>
    </reaction>
</comment>
<comment type="subunit">
    <text>The two chains are formed from a single-chain precursor by the excision of two Arg residues and are held together by 1 or more disulfide bonds.</text>
</comment>
<comment type="subcellular location">
    <subcellularLocation>
        <location>Secreted</location>
    </subcellularLocation>
</comment>
<comment type="tissue specificity">
    <text>Liver and chorioallantoic membrane.</text>
</comment>
<comment type="PTM">
    <text>The vitamin K-dependent, enzymatic carboxylation of some glutamate residues allows the modified protein to bind calcium.</text>
</comment>
<comment type="PTM">
    <text>The activation peptide is cleaved by factor IXa (in the intrinsic pathway), or by factor VIIa (in the extrinsic pathway).</text>
</comment>
<comment type="PTM">
    <text evidence="1">The iron and 2-oxoglutarate dependent 3-hydroxylation of aspartate and asparagine is (R) stereospecific within EGF domains.</text>
</comment>
<comment type="similarity">
    <text evidence="4">Belongs to the peptidase S1 family.</text>
</comment>
<proteinExistence type="evidence at protein level"/>
<name>FA10_CHICK</name>
<feature type="signal peptide" evidence="2">
    <location>
        <begin position="1"/>
        <end position="20"/>
    </location>
</feature>
<feature type="propeptide" id="PRO_0000027810" evidence="7">
    <location>
        <begin position="21"/>
        <end position="40"/>
    </location>
</feature>
<feature type="chain" id="PRO_0000027811" description="Coagulation factor X">
    <location>
        <begin position="41"/>
        <end position="475"/>
    </location>
</feature>
<feature type="chain" id="PRO_0000027812" description="Factor X light chain">
    <location>
        <begin position="41"/>
        <end position="180"/>
    </location>
</feature>
<feature type="chain" id="PRO_0000027813" description="Factor X heavy chain">
    <location>
        <begin position="186"/>
        <end position="475"/>
    </location>
</feature>
<feature type="propeptide" id="PRO_0000027814" description="Activation peptide" evidence="7">
    <location>
        <begin position="186"/>
        <end position="240"/>
    </location>
</feature>
<feature type="chain" id="PRO_0000027815" description="Activated factor Xa heavy chain">
    <location>
        <begin position="241"/>
        <end position="475"/>
    </location>
</feature>
<feature type="domain" description="Gla" evidence="5">
    <location>
        <begin position="41"/>
        <end position="85"/>
    </location>
</feature>
<feature type="domain" description="EGF-like 1; calcium-binding" evidence="3">
    <location>
        <begin position="86"/>
        <end position="122"/>
    </location>
</feature>
<feature type="domain" description="EGF-like 2" evidence="3">
    <location>
        <begin position="125"/>
        <end position="168"/>
    </location>
</feature>
<feature type="domain" description="Peptidase S1" evidence="4">
    <location>
        <begin position="241"/>
        <end position="473"/>
    </location>
</feature>
<feature type="region of interest" description="Disordered" evidence="6">
    <location>
        <begin position="216"/>
        <end position="237"/>
    </location>
</feature>
<feature type="active site" description="Charge relay system" evidence="1">
    <location>
        <position position="282"/>
    </location>
</feature>
<feature type="active site" description="Charge relay system" evidence="1">
    <location>
        <position position="328"/>
    </location>
</feature>
<feature type="active site" description="Charge relay system" evidence="1">
    <location>
        <position position="425"/>
    </location>
</feature>
<feature type="modified residue" description="4-carboxyglutamate" evidence="5">
    <location>
        <position position="46"/>
    </location>
</feature>
<feature type="modified residue" description="4-carboxyglutamate" evidence="5">
    <location>
        <position position="47"/>
    </location>
</feature>
<feature type="modified residue" description="4-carboxyglutamate" evidence="5">
    <location>
        <position position="54"/>
    </location>
</feature>
<feature type="modified residue" description="4-carboxyglutamate" evidence="5">
    <location>
        <position position="56"/>
    </location>
</feature>
<feature type="modified residue" description="4-carboxyglutamate" evidence="5">
    <location>
        <position position="59"/>
    </location>
</feature>
<feature type="modified residue" description="4-carboxyglutamate" evidence="5">
    <location>
        <position position="60"/>
    </location>
</feature>
<feature type="modified residue" description="4-carboxyglutamate" evidence="5">
    <location>
        <position position="65"/>
    </location>
</feature>
<feature type="modified residue" description="4-carboxyglutamate" evidence="5">
    <location>
        <position position="66"/>
    </location>
</feature>
<feature type="modified residue" description="4-carboxyglutamate" evidence="5">
    <location>
        <position position="69"/>
    </location>
</feature>
<feature type="modified residue" description="4-carboxyglutamate" evidence="5">
    <location>
        <position position="72"/>
    </location>
</feature>
<feature type="modified residue" description="4-carboxyglutamate" evidence="5">
    <location>
        <position position="79"/>
    </location>
</feature>
<feature type="modified residue" description="(3R)-3-hydroxyaspartate" evidence="1">
    <location>
        <position position="103"/>
    </location>
</feature>
<feature type="glycosylation site" description="N-linked (GlcNAc...) asparagine" evidence="2">
    <location>
        <position position="196"/>
    </location>
</feature>
<feature type="glycosylation site" description="N-linked (GlcNAc...) asparagine" evidence="2">
    <location>
        <position position="207"/>
    </location>
</feature>
<feature type="glycosylation site" description="N-linked (GlcNAc...) asparagine" evidence="2">
    <location>
        <position position="228"/>
    </location>
</feature>
<feature type="glycosylation site" description="N-linked (GlcNAc...) asparagine" evidence="2">
    <location>
        <position position="285"/>
    </location>
</feature>
<feature type="disulfide bond" evidence="1">
    <location>
        <begin position="57"/>
        <end position="62"/>
    </location>
</feature>
<feature type="disulfide bond" evidence="1">
    <location>
        <begin position="90"/>
        <end position="101"/>
    </location>
</feature>
<feature type="disulfide bond" evidence="1">
    <location>
        <begin position="95"/>
        <end position="110"/>
    </location>
</feature>
<feature type="disulfide bond" evidence="1">
    <location>
        <begin position="112"/>
        <end position="121"/>
    </location>
</feature>
<feature type="disulfide bond" evidence="1">
    <location>
        <begin position="129"/>
        <end position="140"/>
    </location>
</feature>
<feature type="disulfide bond" evidence="1">
    <location>
        <begin position="136"/>
        <end position="152"/>
    </location>
</feature>
<feature type="disulfide bond" evidence="1">
    <location>
        <begin position="154"/>
        <end position="167"/>
    </location>
</feature>
<feature type="disulfide bond" description="Interchain (between light and heavy chains)" evidence="3 4 5">
    <location>
        <begin position="175"/>
        <end position="348"/>
    </location>
</feature>
<feature type="disulfide bond" evidence="1">
    <location>
        <begin position="247"/>
        <end position="252"/>
    </location>
</feature>
<feature type="disulfide bond" evidence="1">
    <location>
        <begin position="267"/>
        <end position="283"/>
    </location>
</feature>
<feature type="disulfide bond" evidence="1">
    <location>
        <begin position="396"/>
        <end position="410"/>
    </location>
</feature>
<feature type="disulfide bond" evidence="1">
    <location>
        <begin position="421"/>
        <end position="449"/>
    </location>
</feature>
<protein>
    <recommendedName>
        <fullName>Coagulation factor X</fullName>
        <ecNumber>3.4.21.6</ecNumber>
    </recommendedName>
    <alternativeName>
        <fullName>Stuart factor</fullName>
    </alternativeName>
    <alternativeName>
        <fullName>Virus-activating protease</fullName>
        <shortName>VAP</shortName>
    </alternativeName>
    <component>
        <recommendedName>
            <fullName>Factor X light chain</fullName>
        </recommendedName>
    </component>
    <component>
        <recommendedName>
            <fullName>Factor X heavy chain</fullName>
        </recommendedName>
    </component>
    <component>
        <recommendedName>
            <fullName>Activated factor Xa heavy chain</fullName>
        </recommendedName>
    </component>
</protein>
<keyword id="KW-0094">Blood coagulation</keyword>
<keyword id="KW-0106">Calcium</keyword>
<keyword id="KW-0165">Cleavage on pair of basic residues</keyword>
<keyword id="KW-0903">Direct protein sequencing</keyword>
<keyword id="KW-1015">Disulfide bond</keyword>
<keyword id="KW-0245">EGF-like domain</keyword>
<keyword id="KW-0301">Gamma-carboxyglutamic acid</keyword>
<keyword id="KW-0325">Glycoprotein</keyword>
<keyword id="KW-0356">Hemostasis</keyword>
<keyword id="KW-0378">Hydrolase</keyword>
<keyword id="KW-0379">Hydroxylation</keyword>
<keyword id="KW-0645">Protease</keyword>
<keyword id="KW-1185">Reference proteome</keyword>
<keyword id="KW-0677">Repeat</keyword>
<keyword id="KW-0964">Secreted</keyword>
<keyword id="KW-0720">Serine protease</keyword>
<keyword id="KW-0732">Signal</keyword>
<keyword id="KW-0865">Zymogen</keyword>
<sequence length="475" mass="53142">MAGRLLLLLLCAALPDELRAEGGVFIKKESADKFLERTKRANSFLEEMKQGNIERECNEERCSKEEAREAFEDNEKTEEFWNIYVDGDQCSSNPCHYGGQCKDGLGSYTCSCLDGYQGKNCEFVIPKYCKINNGDCEQFCSIKKSVQKDVVCSCTSGYELAEDGKQCVSKVKYPCGKVLMKRIKRSVILPTNSNTNATSDQDVPSTNGSILEEVFTTTTESPTPPPRNGSSITDPNVDTRIVGGDECRPGECPWQAVLINEKGEEFCGGTILNEDFILTAAHCINQSKEIKVVVGEVDREKEEHSETTHTAEKIFVHSKYIAETYDNDIALIKLKEPIQFSEYVVPACLPQADFANEVLMNQKSGMVSGFGREFEAGRLSKRLKVLEVPYVDRSTCKQSTNFAITENMFCAGYETEQKDACQGDSGGPHVTRYKDTYFVTGIVSWGEGCARKGKYGVYTKLSRFLRWVRTVMRQK</sequence>
<organism>
    <name type="scientific">Gallus gallus</name>
    <name type="common">Chicken</name>
    <dbReference type="NCBI Taxonomy" id="9031"/>
    <lineage>
        <taxon>Eukaryota</taxon>
        <taxon>Metazoa</taxon>
        <taxon>Chordata</taxon>
        <taxon>Craniata</taxon>
        <taxon>Vertebrata</taxon>
        <taxon>Euteleostomi</taxon>
        <taxon>Archelosauria</taxon>
        <taxon>Archosauria</taxon>
        <taxon>Dinosauria</taxon>
        <taxon>Saurischia</taxon>
        <taxon>Theropoda</taxon>
        <taxon>Coelurosauria</taxon>
        <taxon>Aves</taxon>
        <taxon>Neognathae</taxon>
        <taxon>Galloanserae</taxon>
        <taxon>Galliformes</taxon>
        <taxon>Phasianidae</taxon>
        <taxon>Phasianinae</taxon>
        <taxon>Gallus</taxon>
    </lineage>
</organism>
<evidence type="ECO:0000250" key="1"/>
<evidence type="ECO:0000255" key="2"/>
<evidence type="ECO:0000255" key="3">
    <source>
        <dbReference type="PROSITE-ProRule" id="PRU00076"/>
    </source>
</evidence>
<evidence type="ECO:0000255" key="4">
    <source>
        <dbReference type="PROSITE-ProRule" id="PRU00274"/>
    </source>
</evidence>
<evidence type="ECO:0000255" key="5">
    <source>
        <dbReference type="PROSITE-ProRule" id="PRU00463"/>
    </source>
</evidence>
<evidence type="ECO:0000256" key="6">
    <source>
        <dbReference type="SAM" id="MobiDB-lite"/>
    </source>
</evidence>
<evidence type="ECO:0000269" key="7">
    <source>
    </source>
</evidence>
<dbReference type="EC" id="3.4.21.6"/>
<dbReference type="EMBL" id="D00844">
    <property type="protein sequence ID" value="BAA00724.1"/>
    <property type="molecule type" value="mRNA"/>
</dbReference>
<dbReference type="PIR" id="S15838">
    <property type="entry name" value="EXCH"/>
</dbReference>
<dbReference type="RefSeq" id="NP_990353.1">
    <property type="nucleotide sequence ID" value="NM_205022.2"/>
</dbReference>
<dbReference type="SMR" id="P25155"/>
<dbReference type="FunCoup" id="P25155">
    <property type="interactions" value="1"/>
</dbReference>
<dbReference type="STRING" id="9031.ENSGALP00000042191"/>
<dbReference type="MEROPS" id="S01.216"/>
<dbReference type="GlyCosmos" id="P25155">
    <property type="glycosylation" value="4 sites, No reported glycans"/>
</dbReference>
<dbReference type="GlyGen" id="P25155">
    <property type="glycosylation" value="5 sites"/>
</dbReference>
<dbReference type="PaxDb" id="9031-ENSGALP00000042191"/>
<dbReference type="Ensembl" id="ENSGALT00010035531.1">
    <property type="protein sequence ID" value="ENSGALP00010020645.1"/>
    <property type="gene ID" value="ENSGALG00010014766.1"/>
</dbReference>
<dbReference type="GeneID" id="395876"/>
<dbReference type="KEGG" id="gga:395876"/>
<dbReference type="CTD" id="2159"/>
<dbReference type="VEuPathDB" id="HostDB:geneid_395876"/>
<dbReference type="eggNOG" id="ENOG502QS4N">
    <property type="taxonomic scope" value="Eukaryota"/>
</dbReference>
<dbReference type="GeneTree" id="ENSGT00940000157694"/>
<dbReference type="HOGENOM" id="CLU_006842_19_5_1"/>
<dbReference type="InParanoid" id="P25155"/>
<dbReference type="OMA" id="QKDWAEA"/>
<dbReference type="OrthoDB" id="6380398at2759"/>
<dbReference type="PhylomeDB" id="P25155"/>
<dbReference type="Reactome" id="R-GGA-140834">
    <property type="pathway name" value="Extrinsic Pathway of Fibrin Clot Formation"/>
</dbReference>
<dbReference type="Reactome" id="R-GGA-140837">
    <property type="pathway name" value="Intrinsic Pathway of Fibrin Clot Formation"/>
</dbReference>
<dbReference type="Reactome" id="R-GGA-140875">
    <property type="pathway name" value="Common Pathway of Fibrin Clot Formation"/>
</dbReference>
<dbReference type="Reactome" id="R-GGA-159763">
    <property type="pathway name" value="Transport of gamma-carboxylated protein precursors from the endoplasmic reticulum to the Golgi apparatus"/>
</dbReference>
<dbReference type="Reactome" id="R-GGA-159782">
    <property type="pathway name" value="Removal of aminoterminal propeptides from gamma-carboxylated proteins"/>
</dbReference>
<dbReference type="PRO" id="PR:P25155"/>
<dbReference type="Proteomes" id="UP000000539">
    <property type="component" value="Chromosome 1"/>
</dbReference>
<dbReference type="Bgee" id="ENSGALG00000026677">
    <property type="expression patterns" value="Expressed in liver and 9 other cell types or tissues"/>
</dbReference>
<dbReference type="GO" id="GO:0005615">
    <property type="term" value="C:extracellular space"/>
    <property type="evidence" value="ECO:0000318"/>
    <property type="project" value="GO_Central"/>
</dbReference>
<dbReference type="GO" id="GO:0005509">
    <property type="term" value="F:calcium ion binding"/>
    <property type="evidence" value="ECO:0007669"/>
    <property type="project" value="InterPro"/>
</dbReference>
<dbReference type="GO" id="GO:0005543">
    <property type="term" value="F:phospholipid binding"/>
    <property type="evidence" value="ECO:0007669"/>
    <property type="project" value="Ensembl"/>
</dbReference>
<dbReference type="GO" id="GO:0004252">
    <property type="term" value="F:serine-type endopeptidase activity"/>
    <property type="evidence" value="ECO:0000318"/>
    <property type="project" value="GO_Central"/>
</dbReference>
<dbReference type="GO" id="GO:0007596">
    <property type="term" value="P:blood coagulation"/>
    <property type="evidence" value="ECO:0000318"/>
    <property type="project" value="GO_Central"/>
</dbReference>
<dbReference type="GO" id="GO:0032008">
    <property type="term" value="P:positive regulation of TOR signaling"/>
    <property type="evidence" value="ECO:0007669"/>
    <property type="project" value="Ensembl"/>
</dbReference>
<dbReference type="GO" id="GO:0006508">
    <property type="term" value="P:proteolysis"/>
    <property type="evidence" value="ECO:0007669"/>
    <property type="project" value="UniProtKB-KW"/>
</dbReference>
<dbReference type="CDD" id="cd00054">
    <property type="entry name" value="EGF_CA"/>
    <property type="match status" value="1"/>
</dbReference>
<dbReference type="CDD" id="cd00190">
    <property type="entry name" value="Tryp_SPc"/>
    <property type="match status" value="1"/>
</dbReference>
<dbReference type="FunFam" id="2.40.10.10:FF:000013">
    <property type="entry name" value="Coagulation factor X"/>
    <property type="match status" value="1"/>
</dbReference>
<dbReference type="FunFam" id="2.10.25.10:FF:000162">
    <property type="entry name" value="Coagulation factor X (Predicted)"/>
    <property type="match status" value="1"/>
</dbReference>
<dbReference type="FunFam" id="4.10.740.10:FF:000001">
    <property type="entry name" value="vitamin K-dependent protein S"/>
    <property type="match status" value="1"/>
</dbReference>
<dbReference type="Gene3D" id="4.10.740.10">
    <property type="entry name" value="Coagulation Factor IX"/>
    <property type="match status" value="1"/>
</dbReference>
<dbReference type="Gene3D" id="2.10.25.10">
    <property type="entry name" value="Laminin"/>
    <property type="match status" value="2"/>
</dbReference>
<dbReference type="Gene3D" id="2.40.10.10">
    <property type="entry name" value="Trypsin-like serine proteases"/>
    <property type="match status" value="2"/>
</dbReference>
<dbReference type="InterPro" id="IPR017857">
    <property type="entry name" value="Coagulation_fac-like_Gla_dom"/>
</dbReference>
<dbReference type="InterPro" id="IPR001881">
    <property type="entry name" value="EGF-like_Ca-bd_dom"/>
</dbReference>
<dbReference type="InterPro" id="IPR000742">
    <property type="entry name" value="EGF-like_dom"/>
</dbReference>
<dbReference type="InterPro" id="IPR000152">
    <property type="entry name" value="EGF-type_Asp/Asn_hydroxyl_site"/>
</dbReference>
<dbReference type="InterPro" id="IPR018097">
    <property type="entry name" value="EGF_Ca-bd_CS"/>
</dbReference>
<dbReference type="InterPro" id="IPR035972">
    <property type="entry name" value="GLA-like_dom_SF"/>
</dbReference>
<dbReference type="InterPro" id="IPR000294">
    <property type="entry name" value="GLA_domain"/>
</dbReference>
<dbReference type="InterPro" id="IPR009030">
    <property type="entry name" value="Growth_fac_rcpt_cys_sf"/>
</dbReference>
<dbReference type="InterPro" id="IPR012224">
    <property type="entry name" value="Pept_S1A_FX"/>
</dbReference>
<dbReference type="InterPro" id="IPR050442">
    <property type="entry name" value="Peptidase_S1_coag_factors"/>
</dbReference>
<dbReference type="InterPro" id="IPR009003">
    <property type="entry name" value="Peptidase_S1_PA"/>
</dbReference>
<dbReference type="InterPro" id="IPR043504">
    <property type="entry name" value="Peptidase_S1_PA_chymotrypsin"/>
</dbReference>
<dbReference type="InterPro" id="IPR001314">
    <property type="entry name" value="Peptidase_S1A"/>
</dbReference>
<dbReference type="InterPro" id="IPR001254">
    <property type="entry name" value="Trypsin_dom"/>
</dbReference>
<dbReference type="InterPro" id="IPR018114">
    <property type="entry name" value="TRYPSIN_HIS"/>
</dbReference>
<dbReference type="InterPro" id="IPR033116">
    <property type="entry name" value="TRYPSIN_SER"/>
</dbReference>
<dbReference type="PANTHER" id="PTHR24278">
    <property type="entry name" value="COAGULATION FACTOR"/>
    <property type="match status" value="1"/>
</dbReference>
<dbReference type="PANTHER" id="PTHR24278:SF28">
    <property type="entry name" value="COAGULATION FACTOR X"/>
    <property type="match status" value="1"/>
</dbReference>
<dbReference type="Pfam" id="PF00008">
    <property type="entry name" value="EGF"/>
    <property type="match status" value="1"/>
</dbReference>
<dbReference type="Pfam" id="PF14670">
    <property type="entry name" value="FXa_inhibition"/>
    <property type="match status" value="1"/>
</dbReference>
<dbReference type="Pfam" id="PF00594">
    <property type="entry name" value="Gla"/>
    <property type="match status" value="1"/>
</dbReference>
<dbReference type="Pfam" id="PF00089">
    <property type="entry name" value="Trypsin"/>
    <property type="match status" value="1"/>
</dbReference>
<dbReference type="PIRSF" id="PIRSF001143">
    <property type="entry name" value="Factor_X"/>
    <property type="match status" value="1"/>
</dbReference>
<dbReference type="PRINTS" id="PR00722">
    <property type="entry name" value="CHYMOTRYPSIN"/>
</dbReference>
<dbReference type="PRINTS" id="PR00010">
    <property type="entry name" value="EGFBLOOD"/>
</dbReference>
<dbReference type="PRINTS" id="PR00001">
    <property type="entry name" value="GLABLOOD"/>
</dbReference>
<dbReference type="SMART" id="SM00181">
    <property type="entry name" value="EGF"/>
    <property type="match status" value="2"/>
</dbReference>
<dbReference type="SMART" id="SM00179">
    <property type="entry name" value="EGF_CA"/>
    <property type="match status" value="1"/>
</dbReference>
<dbReference type="SMART" id="SM00069">
    <property type="entry name" value="GLA"/>
    <property type="match status" value="1"/>
</dbReference>
<dbReference type="SMART" id="SM00020">
    <property type="entry name" value="Tryp_SPc"/>
    <property type="match status" value="1"/>
</dbReference>
<dbReference type="SUPFAM" id="SSF57630">
    <property type="entry name" value="GLA-domain"/>
    <property type="match status" value="1"/>
</dbReference>
<dbReference type="SUPFAM" id="SSF57184">
    <property type="entry name" value="Growth factor receptor domain"/>
    <property type="match status" value="1"/>
</dbReference>
<dbReference type="SUPFAM" id="SSF50494">
    <property type="entry name" value="Trypsin-like serine proteases"/>
    <property type="match status" value="1"/>
</dbReference>
<dbReference type="PROSITE" id="PS00010">
    <property type="entry name" value="ASX_HYDROXYL"/>
    <property type="match status" value="1"/>
</dbReference>
<dbReference type="PROSITE" id="PS00022">
    <property type="entry name" value="EGF_1"/>
    <property type="match status" value="1"/>
</dbReference>
<dbReference type="PROSITE" id="PS01186">
    <property type="entry name" value="EGF_2"/>
    <property type="match status" value="2"/>
</dbReference>
<dbReference type="PROSITE" id="PS50026">
    <property type="entry name" value="EGF_3"/>
    <property type="match status" value="1"/>
</dbReference>
<dbReference type="PROSITE" id="PS01187">
    <property type="entry name" value="EGF_CA"/>
    <property type="match status" value="1"/>
</dbReference>
<dbReference type="PROSITE" id="PS00011">
    <property type="entry name" value="GLA_1"/>
    <property type="match status" value="1"/>
</dbReference>
<dbReference type="PROSITE" id="PS50998">
    <property type="entry name" value="GLA_2"/>
    <property type="match status" value="1"/>
</dbReference>
<dbReference type="PROSITE" id="PS50240">
    <property type="entry name" value="TRYPSIN_DOM"/>
    <property type="match status" value="1"/>
</dbReference>
<dbReference type="PROSITE" id="PS00134">
    <property type="entry name" value="TRYPSIN_HIS"/>
    <property type="match status" value="1"/>
</dbReference>
<dbReference type="PROSITE" id="PS00135">
    <property type="entry name" value="TRYPSIN_SER"/>
    <property type="match status" value="1"/>
</dbReference>
<gene>
    <name type="primary">F10</name>
    <name type="synonym">FX</name>
</gene>
<accession>P25155</accession>
<reference key="1">
    <citation type="journal article" date="1991" name="FEBS Lett.">
        <title>Primary structure of the virus activating protease from chick embryo. Its identity with the blood clotting factor Xa.</title>
        <authorList>
            <person name="Suzuki H."/>
            <person name="Harada A."/>
            <person name="Hayashi Y."/>
            <person name="Wada K."/>
            <person name="Asaka J."/>
            <person name="Gotoh B."/>
            <person name="Ogasawara T."/>
            <person name="Nagai Y."/>
        </authorList>
    </citation>
    <scope>NUCLEOTIDE SEQUENCE [MRNA]</scope>
    <source>
        <tissue>Chorioallantoic membrane</tissue>
    </source>
</reference>
<reference key="2">
    <citation type="journal article" date="1990" name="EMBO J.">
        <title>An endoprotease homologous to the blood clotting factor X as a determinant of viral tropism in chick embryo.</title>
        <authorList>
            <person name="Gotoh B."/>
            <person name="Ogasawara T."/>
            <person name="Toyoda T."/>
            <person name="Inocencio N.M."/>
            <person name="Hamaguchi M."/>
            <person name="Nagai Y."/>
        </authorList>
    </citation>
    <scope>PROTEIN SEQUENCE OF 41-55 AND 241-261</scope>
    <source>
        <tissue>Allantoic fluid</tissue>
    </source>
</reference>